<dbReference type="EMBL" id="DS027688">
    <property type="protein sequence ID" value="EAW22934.1"/>
    <property type="molecule type" value="Genomic_DNA"/>
</dbReference>
<dbReference type="RefSeq" id="XP_001264831.1">
    <property type="nucleotide sequence ID" value="XM_001264830.1"/>
</dbReference>
<dbReference type="SMR" id="A1D3E1"/>
<dbReference type="STRING" id="331117.A1D3E1"/>
<dbReference type="EnsemblFungi" id="EAW22934">
    <property type="protein sequence ID" value="EAW22934"/>
    <property type="gene ID" value="NFIA_016300"/>
</dbReference>
<dbReference type="GeneID" id="4591883"/>
<dbReference type="KEGG" id="nfi:NFIA_016300"/>
<dbReference type="VEuPathDB" id="FungiDB:NFIA_016300"/>
<dbReference type="eggNOG" id="KOG2975">
    <property type="taxonomic scope" value="Eukaryota"/>
</dbReference>
<dbReference type="HOGENOM" id="CLU_027018_0_0_1"/>
<dbReference type="OMA" id="EYFVHFH"/>
<dbReference type="OrthoDB" id="25498at2759"/>
<dbReference type="Proteomes" id="UP000006702">
    <property type="component" value="Unassembled WGS sequence"/>
</dbReference>
<dbReference type="GO" id="GO:0016282">
    <property type="term" value="C:eukaryotic 43S preinitiation complex"/>
    <property type="evidence" value="ECO:0007669"/>
    <property type="project" value="UniProtKB-UniRule"/>
</dbReference>
<dbReference type="GO" id="GO:0033290">
    <property type="term" value="C:eukaryotic 48S preinitiation complex"/>
    <property type="evidence" value="ECO:0007669"/>
    <property type="project" value="UniProtKB-UniRule"/>
</dbReference>
<dbReference type="GO" id="GO:0071540">
    <property type="term" value="C:eukaryotic translation initiation factor 3 complex, eIF3e"/>
    <property type="evidence" value="ECO:0007669"/>
    <property type="project" value="EnsemblFungi"/>
</dbReference>
<dbReference type="GO" id="GO:0071541">
    <property type="term" value="C:eukaryotic translation initiation factor 3 complex, eIF3m"/>
    <property type="evidence" value="ECO:0007669"/>
    <property type="project" value="EnsemblFungi"/>
</dbReference>
<dbReference type="GO" id="GO:0008237">
    <property type="term" value="F:metallopeptidase activity"/>
    <property type="evidence" value="ECO:0007669"/>
    <property type="project" value="InterPro"/>
</dbReference>
<dbReference type="GO" id="GO:0003743">
    <property type="term" value="F:translation initiation factor activity"/>
    <property type="evidence" value="ECO:0007669"/>
    <property type="project" value="UniProtKB-UniRule"/>
</dbReference>
<dbReference type="GO" id="GO:0031369">
    <property type="term" value="F:translation initiation factor binding"/>
    <property type="evidence" value="ECO:0007669"/>
    <property type="project" value="InterPro"/>
</dbReference>
<dbReference type="GO" id="GO:0001732">
    <property type="term" value="P:formation of cytoplasmic translation initiation complex"/>
    <property type="evidence" value="ECO:0007669"/>
    <property type="project" value="UniProtKB-UniRule"/>
</dbReference>
<dbReference type="CDD" id="cd08064">
    <property type="entry name" value="MPN_eIF3f"/>
    <property type="match status" value="1"/>
</dbReference>
<dbReference type="FunFam" id="3.40.140.10:FF:000019">
    <property type="entry name" value="Eukaryotic translation initiation factor 3 subunit F"/>
    <property type="match status" value="1"/>
</dbReference>
<dbReference type="Gene3D" id="3.40.140.10">
    <property type="entry name" value="Cytidine Deaminase, domain 2"/>
    <property type="match status" value="1"/>
</dbReference>
<dbReference type="HAMAP" id="MF_03005">
    <property type="entry name" value="eIF3f"/>
    <property type="match status" value="1"/>
</dbReference>
<dbReference type="InterPro" id="IPR027531">
    <property type="entry name" value="eIF3f"/>
</dbReference>
<dbReference type="InterPro" id="IPR024969">
    <property type="entry name" value="EIF3F/CSN6-like_C"/>
</dbReference>
<dbReference type="InterPro" id="IPR000555">
    <property type="entry name" value="JAMM/MPN+_dom"/>
</dbReference>
<dbReference type="InterPro" id="IPR037518">
    <property type="entry name" value="MPN"/>
</dbReference>
<dbReference type="PANTHER" id="PTHR10540:SF6">
    <property type="entry name" value="EUKARYOTIC TRANSLATION INITIATION FACTOR 3 SUBUNIT F"/>
    <property type="match status" value="1"/>
</dbReference>
<dbReference type="PANTHER" id="PTHR10540">
    <property type="entry name" value="EUKARYOTIC TRANSLATION INITIATION FACTOR 3 SUBUNIT F-RELATED"/>
    <property type="match status" value="1"/>
</dbReference>
<dbReference type="Pfam" id="PF01398">
    <property type="entry name" value="JAB"/>
    <property type="match status" value="1"/>
</dbReference>
<dbReference type="Pfam" id="PF13012">
    <property type="entry name" value="MitMem_reg"/>
    <property type="match status" value="1"/>
</dbReference>
<dbReference type="SMART" id="SM00232">
    <property type="entry name" value="JAB_MPN"/>
    <property type="match status" value="1"/>
</dbReference>
<dbReference type="PROSITE" id="PS50249">
    <property type="entry name" value="MPN"/>
    <property type="match status" value="1"/>
</dbReference>
<protein>
    <recommendedName>
        <fullName evidence="1">Eukaryotic translation initiation factor 3 subunit F</fullName>
        <shortName evidence="1">eIF3f</shortName>
    </recommendedName>
</protein>
<organism>
    <name type="scientific">Neosartorya fischeri (strain ATCC 1020 / DSM 3700 / CBS 544.65 / FGSC A1164 / JCM 1740 / NRRL 181 / WB 181)</name>
    <name type="common">Aspergillus fischerianus</name>
    <dbReference type="NCBI Taxonomy" id="331117"/>
    <lineage>
        <taxon>Eukaryota</taxon>
        <taxon>Fungi</taxon>
        <taxon>Dikarya</taxon>
        <taxon>Ascomycota</taxon>
        <taxon>Pezizomycotina</taxon>
        <taxon>Eurotiomycetes</taxon>
        <taxon>Eurotiomycetidae</taxon>
        <taxon>Eurotiales</taxon>
        <taxon>Aspergillaceae</taxon>
        <taxon>Aspergillus</taxon>
        <taxon>Aspergillus subgen. Fumigati</taxon>
    </lineage>
</organism>
<reference key="1">
    <citation type="journal article" date="2008" name="PLoS Genet.">
        <title>Genomic islands in the pathogenic filamentous fungus Aspergillus fumigatus.</title>
        <authorList>
            <person name="Fedorova N.D."/>
            <person name="Khaldi N."/>
            <person name="Joardar V.S."/>
            <person name="Maiti R."/>
            <person name="Amedeo P."/>
            <person name="Anderson M.J."/>
            <person name="Crabtree J."/>
            <person name="Silva J.C."/>
            <person name="Badger J.H."/>
            <person name="Albarraq A."/>
            <person name="Angiuoli S."/>
            <person name="Bussey H."/>
            <person name="Bowyer P."/>
            <person name="Cotty P.J."/>
            <person name="Dyer P.S."/>
            <person name="Egan A."/>
            <person name="Galens K."/>
            <person name="Fraser-Liggett C.M."/>
            <person name="Haas B.J."/>
            <person name="Inman J.M."/>
            <person name="Kent R."/>
            <person name="Lemieux S."/>
            <person name="Malavazi I."/>
            <person name="Orvis J."/>
            <person name="Roemer T."/>
            <person name="Ronning C.M."/>
            <person name="Sundaram J.P."/>
            <person name="Sutton G."/>
            <person name="Turner G."/>
            <person name="Venter J.C."/>
            <person name="White O.R."/>
            <person name="Whitty B.R."/>
            <person name="Youngman P."/>
            <person name="Wolfe K.H."/>
            <person name="Goldman G.H."/>
            <person name="Wortman J.R."/>
            <person name="Jiang B."/>
            <person name="Denning D.W."/>
            <person name="Nierman W.C."/>
        </authorList>
    </citation>
    <scope>NUCLEOTIDE SEQUENCE [LARGE SCALE GENOMIC DNA]</scope>
    <source>
        <strain>ATCC 1020 / DSM 3700 / CBS 544.65 / FGSC A1164 / JCM 1740 / NRRL 181 / WB 181</strain>
    </source>
</reference>
<feature type="chain" id="PRO_0000364332" description="Eukaryotic translation initiation factor 3 subunit F">
    <location>
        <begin position="1"/>
        <end position="345"/>
    </location>
</feature>
<feature type="domain" description="MPN" evidence="2">
    <location>
        <begin position="30"/>
        <end position="166"/>
    </location>
</feature>
<feature type="region of interest" description="Disordered" evidence="3">
    <location>
        <begin position="310"/>
        <end position="345"/>
    </location>
</feature>
<feature type="compositionally biased region" description="Low complexity" evidence="3">
    <location>
        <begin position="312"/>
        <end position="321"/>
    </location>
</feature>
<feature type="compositionally biased region" description="Gly residues" evidence="3">
    <location>
        <begin position="322"/>
        <end position="331"/>
    </location>
</feature>
<feature type="compositionally biased region" description="Basic and acidic residues" evidence="3">
    <location>
        <begin position="335"/>
        <end position="345"/>
    </location>
</feature>
<keyword id="KW-0963">Cytoplasm</keyword>
<keyword id="KW-0396">Initiation factor</keyword>
<keyword id="KW-0648">Protein biosynthesis</keyword>
<keyword id="KW-1185">Reference proteome</keyword>
<accession>A1D3E1</accession>
<proteinExistence type="inferred from homology"/>
<gene>
    <name type="ORF">NFIA_016300</name>
</gene>
<evidence type="ECO:0000255" key="1">
    <source>
        <dbReference type="HAMAP-Rule" id="MF_03005"/>
    </source>
</evidence>
<evidence type="ECO:0000255" key="2">
    <source>
        <dbReference type="PROSITE-ProRule" id="PRU01182"/>
    </source>
</evidence>
<evidence type="ECO:0000256" key="3">
    <source>
        <dbReference type="SAM" id="MobiDB-lite"/>
    </source>
</evidence>
<comment type="function">
    <text evidence="1">Component of the eukaryotic translation initiation factor 3 (eIF-3) complex, which is involved in protein synthesis of a specialized repertoire of mRNAs and, together with other initiation factors, stimulates binding of mRNA and methionyl-tRNAi to the 40S ribosome. The eIF-3 complex specifically targets and initiates translation of a subset of mRNAs involved in cell proliferation.</text>
</comment>
<comment type="subunit">
    <text evidence="1">Component of the eukaryotic translation initiation factor 3 (eIF-3) complex.</text>
</comment>
<comment type="subcellular location">
    <subcellularLocation>
        <location evidence="1">Cytoplasm</location>
    </subcellularLocation>
</comment>
<comment type="similarity">
    <text evidence="1">Belongs to the eIF-3 subunit F family.</text>
</comment>
<sequence length="345" mass="37257">MAETDSFLHLARPLGPVAVGSAPTTAPLNVVIQPQAIFSILDHSLRRNADQERVIGTLLGTRSEDGTEVEIRSTFAVGHTETTDQVEVDMEYQKQMLALHLKANPKEVLVGWYATSSELNTFSALIQNFYSGQGDGTWPHPAVHLTVSTEPGKDIETRAYISAPVGVTAERAADSAAFIPVPYEIRYGEAEKSGLETIASAKDAESRATNIFTDIEALERAIEEVLGMIDRVSRYVESVIDEEAPASTALGQFLLNALALAPKVEPADIERDFNNHIQDVLVVSYLANTIRTQMELSNRLATAQLTLGGEGASAEAGAQRGQRGGRGGRGGQQRTQERASEEVRA</sequence>
<name>EIF3F_NEOFI</name>